<organism>
    <name type="scientific">Psychromonas ingrahamii (strain DSM 17664 / CCUG 51855 / 37)</name>
    <dbReference type="NCBI Taxonomy" id="357804"/>
    <lineage>
        <taxon>Bacteria</taxon>
        <taxon>Pseudomonadati</taxon>
        <taxon>Pseudomonadota</taxon>
        <taxon>Gammaproteobacteria</taxon>
        <taxon>Alteromonadales</taxon>
        <taxon>Psychromonadaceae</taxon>
        <taxon>Psychromonas</taxon>
    </lineage>
</organism>
<accession>A1SRZ1</accession>
<reference key="1">
    <citation type="journal article" date="2008" name="BMC Genomics">
        <title>Genomics of an extreme psychrophile, Psychromonas ingrahamii.</title>
        <authorList>
            <person name="Riley M."/>
            <person name="Staley J.T."/>
            <person name="Danchin A."/>
            <person name="Wang T.Z."/>
            <person name="Brettin T.S."/>
            <person name="Hauser L.J."/>
            <person name="Land M.L."/>
            <person name="Thompson L.S."/>
        </authorList>
    </citation>
    <scope>NUCLEOTIDE SEQUENCE [LARGE SCALE GENOMIC DNA]</scope>
    <source>
        <strain>DSM 17664 / CCUG 51855 / 37</strain>
    </source>
</reference>
<evidence type="ECO:0000255" key="1">
    <source>
        <dbReference type="HAMAP-Rule" id="MF_00181"/>
    </source>
</evidence>
<gene>
    <name evidence="1" type="primary">pepA</name>
    <name type="ordered locus">Ping_0395</name>
</gene>
<proteinExistence type="inferred from homology"/>
<protein>
    <recommendedName>
        <fullName evidence="1">Probable cytosol aminopeptidase</fullName>
        <ecNumber evidence="1">3.4.11.1</ecNumber>
    </recommendedName>
    <alternativeName>
        <fullName evidence="1">Leucine aminopeptidase</fullName>
        <shortName evidence="1">LAP</shortName>
        <ecNumber evidence="1">3.4.11.10</ecNumber>
    </alternativeName>
    <alternativeName>
        <fullName evidence="1">Leucyl aminopeptidase</fullName>
    </alternativeName>
</protein>
<dbReference type="EC" id="3.4.11.1" evidence="1"/>
<dbReference type="EC" id="3.4.11.10" evidence="1"/>
<dbReference type="EMBL" id="CP000510">
    <property type="protein sequence ID" value="ABM02256.1"/>
    <property type="molecule type" value="Genomic_DNA"/>
</dbReference>
<dbReference type="RefSeq" id="WP_011768815.1">
    <property type="nucleotide sequence ID" value="NC_008709.1"/>
</dbReference>
<dbReference type="SMR" id="A1SRZ1"/>
<dbReference type="STRING" id="357804.Ping_0395"/>
<dbReference type="MEROPS" id="M17.003"/>
<dbReference type="KEGG" id="pin:Ping_0395"/>
<dbReference type="eggNOG" id="COG0260">
    <property type="taxonomic scope" value="Bacteria"/>
</dbReference>
<dbReference type="HOGENOM" id="CLU_013734_0_1_6"/>
<dbReference type="OrthoDB" id="9809354at2"/>
<dbReference type="Proteomes" id="UP000000639">
    <property type="component" value="Chromosome"/>
</dbReference>
<dbReference type="GO" id="GO:0005737">
    <property type="term" value="C:cytoplasm"/>
    <property type="evidence" value="ECO:0007669"/>
    <property type="project" value="UniProtKB-SubCell"/>
</dbReference>
<dbReference type="GO" id="GO:0030145">
    <property type="term" value="F:manganese ion binding"/>
    <property type="evidence" value="ECO:0007669"/>
    <property type="project" value="UniProtKB-UniRule"/>
</dbReference>
<dbReference type="GO" id="GO:0070006">
    <property type="term" value="F:metalloaminopeptidase activity"/>
    <property type="evidence" value="ECO:0007669"/>
    <property type="project" value="InterPro"/>
</dbReference>
<dbReference type="GO" id="GO:0006508">
    <property type="term" value="P:proteolysis"/>
    <property type="evidence" value="ECO:0007669"/>
    <property type="project" value="UniProtKB-KW"/>
</dbReference>
<dbReference type="CDD" id="cd00433">
    <property type="entry name" value="Peptidase_M17"/>
    <property type="match status" value="1"/>
</dbReference>
<dbReference type="FunFam" id="3.40.220.10:FF:000001">
    <property type="entry name" value="Probable cytosol aminopeptidase"/>
    <property type="match status" value="1"/>
</dbReference>
<dbReference type="FunFam" id="3.40.630.10:FF:000004">
    <property type="entry name" value="Probable cytosol aminopeptidase"/>
    <property type="match status" value="1"/>
</dbReference>
<dbReference type="Gene3D" id="3.40.220.10">
    <property type="entry name" value="Leucine Aminopeptidase, subunit E, domain 1"/>
    <property type="match status" value="1"/>
</dbReference>
<dbReference type="Gene3D" id="3.40.630.10">
    <property type="entry name" value="Zn peptidases"/>
    <property type="match status" value="1"/>
</dbReference>
<dbReference type="HAMAP" id="MF_00181">
    <property type="entry name" value="Cytosol_peptidase_M17"/>
    <property type="match status" value="1"/>
</dbReference>
<dbReference type="InterPro" id="IPR011356">
    <property type="entry name" value="Leucine_aapep/pepB"/>
</dbReference>
<dbReference type="InterPro" id="IPR043472">
    <property type="entry name" value="Macro_dom-like"/>
</dbReference>
<dbReference type="InterPro" id="IPR000819">
    <property type="entry name" value="Peptidase_M17_C"/>
</dbReference>
<dbReference type="InterPro" id="IPR023042">
    <property type="entry name" value="Peptidase_M17_leu_NH2_pept"/>
</dbReference>
<dbReference type="InterPro" id="IPR008283">
    <property type="entry name" value="Peptidase_M17_N"/>
</dbReference>
<dbReference type="NCBIfam" id="NF002072">
    <property type="entry name" value="PRK00913.1-1"/>
    <property type="match status" value="1"/>
</dbReference>
<dbReference type="NCBIfam" id="NF002074">
    <property type="entry name" value="PRK00913.1-4"/>
    <property type="match status" value="1"/>
</dbReference>
<dbReference type="PANTHER" id="PTHR11963:SF23">
    <property type="entry name" value="CYTOSOL AMINOPEPTIDASE"/>
    <property type="match status" value="1"/>
</dbReference>
<dbReference type="PANTHER" id="PTHR11963">
    <property type="entry name" value="LEUCINE AMINOPEPTIDASE-RELATED"/>
    <property type="match status" value="1"/>
</dbReference>
<dbReference type="Pfam" id="PF00883">
    <property type="entry name" value="Peptidase_M17"/>
    <property type="match status" value="1"/>
</dbReference>
<dbReference type="Pfam" id="PF02789">
    <property type="entry name" value="Peptidase_M17_N"/>
    <property type="match status" value="1"/>
</dbReference>
<dbReference type="PRINTS" id="PR00481">
    <property type="entry name" value="LAMNOPPTDASE"/>
</dbReference>
<dbReference type="SUPFAM" id="SSF52949">
    <property type="entry name" value="Macro domain-like"/>
    <property type="match status" value="1"/>
</dbReference>
<dbReference type="SUPFAM" id="SSF53187">
    <property type="entry name" value="Zn-dependent exopeptidases"/>
    <property type="match status" value="1"/>
</dbReference>
<dbReference type="PROSITE" id="PS00631">
    <property type="entry name" value="CYTOSOL_AP"/>
    <property type="match status" value="1"/>
</dbReference>
<keyword id="KW-0031">Aminopeptidase</keyword>
<keyword id="KW-0963">Cytoplasm</keyword>
<keyword id="KW-0378">Hydrolase</keyword>
<keyword id="KW-0464">Manganese</keyword>
<keyword id="KW-0479">Metal-binding</keyword>
<keyword id="KW-0645">Protease</keyword>
<keyword id="KW-1185">Reference proteome</keyword>
<sequence length="504" mass="54703">MEFSVKSGSPEKQRSACIVVGVFEPRRLSRAGEQLDEISEGYLSTLLRRGDIEGKIGQVLFLHNVPNVLSERVLLVGCGKERELTETQYKQIIAKTITTLNDTGALEAICFLSELHIKGRDTYWAVRQATEATQDCLYNFDKFKTNKENTRRPLRKLTFNVTSRKELARAELGLQHALAVASGAKACKDLANMPPNICTPLYLSEQAIALGQRFEKITTEIVDSEQMAELKMDSYLAVAKGSANPAYMSLMHYNGGNADQKPIVLVGKGLTFDSGGISLKPGEAMDEMKYDMGGAASVFGAMKALAKLNLPINVIGILAGAENMPAGNAYRPGDILTTMSGQTVEVLNTDAEGRLVLCDVLTYVERFEPDCVVDIATLTGACIMALGHHISGLMTPHKGLANELLSASNQSSDKAWQLPMDDEFQKQLESPFADMANIGGRPAGSITAACFLSRFTKSYTWAHLDVAGTAWRSGANKGSTGRPVSLLTQFLINRSENETTAVNS</sequence>
<name>AMPA_PSYIN</name>
<comment type="function">
    <text evidence="1">Presumably involved in the processing and regular turnover of intracellular proteins. Catalyzes the removal of unsubstituted N-terminal amino acids from various peptides.</text>
</comment>
<comment type="catalytic activity">
    <reaction evidence="1">
        <text>Release of an N-terminal amino acid, Xaa-|-Yaa-, in which Xaa is preferably Leu, but may be other amino acids including Pro although not Arg or Lys, and Yaa may be Pro. Amino acid amides and methyl esters are also readily hydrolyzed, but rates on arylamides are exceedingly low.</text>
        <dbReference type="EC" id="3.4.11.1"/>
    </reaction>
</comment>
<comment type="catalytic activity">
    <reaction evidence="1">
        <text>Release of an N-terminal amino acid, preferentially leucine, but not glutamic or aspartic acids.</text>
        <dbReference type="EC" id="3.4.11.10"/>
    </reaction>
</comment>
<comment type="cofactor">
    <cofactor evidence="1">
        <name>Mn(2+)</name>
        <dbReference type="ChEBI" id="CHEBI:29035"/>
    </cofactor>
    <text evidence="1">Binds 2 manganese ions per subunit.</text>
</comment>
<comment type="subcellular location">
    <subcellularLocation>
        <location evidence="1">Cytoplasm</location>
    </subcellularLocation>
</comment>
<comment type="similarity">
    <text evidence="1">Belongs to the peptidase M17 family.</text>
</comment>
<feature type="chain" id="PRO_1000019961" description="Probable cytosol aminopeptidase">
    <location>
        <begin position="1"/>
        <end position="504"/>
    </location>
</feature>
<feature type="active site" evidence="1">
    <location>
        <position position="280"/>
    </location>
</feature>
<feature type="active site" evidence="1">
    <location>
        <position position="354"/>
    </location>
</feature>
<feature type="binding site" evidence="1">
    <location>
        <position position="268"/>
    </location>
    <ligand>
        <name>Mn(2+)</name>
        <dbReference type="ChEBI" id="CHEBI:29035"/>
        <label>2</label>
    </ligand>
</feature>
<feature type="binding site" evidence="1">
    <location>
        <position position="273"/>
    </location>
    <ligand>
        <name>Mn(2+)</name>
        <dbReference type="ChEBI" id="CHEBI:29035"/>
        <label>1</label>
    </ligand>
</feature>
<feature type="binding site" evidence="1">
    <location>
        <position position="273"/>
    </location>
    <ligand>
        <name>Mn(2+)</name>
        <dbReference type="ChEBI" id="CHEBI:29035"/>
        <label>2</label>
    </ligand>
</feature>
<feature type="binding site" evidence="1">
    <location>
        <position position="291"/>
    </location>
    <ligand>
        <name>Mn(2+)</name>
        <dbReference type="ChEBI" id="CHEBI:29035"/>
        <label>2</label>
    </ligand>
</feature>
<feature type="binding site" evidence="1">
    <location>
        <position position="350"/>
    </location>
    <ligand>
        <name>Mn(2+)</name>
        <dbReference type="ChEBI" id="CHEBI:29035"/>
        <label>1</label>
    </ligand>
</feature>
<feature type="binding site" evidence="1">
    <location>
        <position position="352"/>
    </location>
    <ligand>
        <name>Mn(2+)</name>
        <dbReference type="ChEBI" id="CHEBI:29035"/>
        <label>1</label>
    </ligand>
</feature>
<feature type="binding site" evidence="1">
    <location>
        <position position="352"/>
    </location>
    <ligand>
        <name>Mn(2+)</name>
        <dbReference type="ChEBI" id="CHEBI:29035"/>
        <label>2</label>
    </ligand>
</feature>